<feature type="chain" id="PRO_0000164777" description="Gene 51 protein">
    <location>
        <begin position="1"/>
        <end position="67"/>
    </location>
</feature>
<sequence length="67" mass="7512">MKKGTKVIVQRDETKHPSKGTWPMFRGRKGVVTCEVRGAGPVEYGVSFSGGDSADAYFKRYELTERK</sequence>
<keyword id="KW-1185">Reference proteome</keyword>
<dbReference type="EMBL" id="Z18946">
    <property type="protein sequence ID" value="CAA79427.1"/>
    <property type="molecule type" value="Genomic_DNA"/>
</dbReference>
<dbReference type="PIR" id="S30996">
    <property type="entry name" value="S30996"/>
</dbReference>
<dbReference type="RefSeq" id="NP_039715.1">
    <property type="nucleotide sequence ID" value="NC_001335.1"/>
</dbReference>
<dbReference type="SMR" id="Q05263"/>
<dbReference type="GeneID" id="2942967"/>
<dbReference type="KEGG" id="vg:2942967"/>
<dbReference type="OrthoDB" id="23652at10239"/>
<dbReference type="Proteomes" id="UP000002123">
    <property type="component" value="Genome"/>
</dbReference>
<name>VG51_BPML5</name>
<reference key="1">
    <citation type="journal article" date="1993" name="Mol. Microbiol.">
        <title>DNA sequence, structure and gene expression of mycobacteriophage L5: a phage system for mycobacterial genetics.</title>
        <authorList>
            <person name="Hatfull G.F."/>
            <person name="Sarkis G.J."/>
        </authorList>
    </citation>
    <scope>NUCLEOTIDE SEQUENCE [LARGE SCALE GENOMIC DNA]</scope>
</reference>
<organismHost>
    <name type="scientific">Mycobacterium</name>
    <dbReference type="NCBI Taxonomy" id="1763"/>
</organismHost>
<gene>
    <name type="primary">51</name>
</gene>
<accession>Q05263</accession>
<proteinExistence type="predicted"/>
<organism>
    <name type="scientific">Mycobacterium phage L5</name>
    <name type="common">Mycobacteriophage L5</name>
    <dbReference type="NCBI Taxonomy" id="31757"/>
    <lineage>
        <taxon>Viruses</taxon>
        <taxon>Duplodnaviria</taxon>
        <taxon>Heunggongvirae</taxon>
        <taxon>Uroviricota</taxon>
        <taxon>Caudoviricetes</taxon>
        <taxon>Fromanvirus</taxon>
    </lineage>
</organism>
<protein>
    <recommendedName>
        <fullName>Gene 51 protein</fullName>
    </recommendedName>
    <alternativeName>
        <fullName>Gp51</fullName>
    </alternativeName>
</protein>